<keyword id="KW-0028">Amino-acid biosynthesis</keyword>
<keyword id="KW-0100">Branched-chain amino acid biosynthesis</keyword>
<keyword id="KW-0963">Cytoplasm</keyword>
<keyword id="KW-0432">Leucine biosynthesis</keyword>
<keyword id="KW-0460">Magnesium</keyword>
<keyword id="KW-0464">Manganese</keyword>
<keyword id="KW-0479">Metal-binding</keyword>
<keyword id="KW-0520">NAD</keyword>
<keyword id="KW-0560">Oxidoreductase</keyword>
<keyword id="KW-1185">Reference proteome</keyword>
<gene>
    <name evidence="1" type="primary">leuB</name>
    <name type="ordered locus">XOO0940</name>
</gene>
<comment type="function">
    <text evidence="1">Catalyzes the oxidation of 3-carboxy-2-hydroxy-4-methylpentanoate (3-isopropylmalate) to 3-carboxy-4-methyl-2-oxopentanoate. The product decarboxylates to 4-methyl-2 oxopentanoate.</text>
</comment>
<comment type="catalytic activity">
    <reaction evidence="1">
        <text>(2R,3S)-3-isopropylmalate + NAD(+) = 4-methyl-2-oxopentanoate + CO2 + NADH</text>
        <dbReference type="Rhea" id="RHEA:32271"/>
        <dbReference type="ChEBI" id="CHEBI:16526"/>
        <dbReference type="ChEBI" id="CHEBI:17865"/>
        <dbReference type="ChEBI" id="CHEBI:35121"/>
        <dbReference type="ChEBI" id="CHEBI:57540"/>
        <dbReference type="ChEBI" id="CHEBI:57945"/>
        <dbReference type="EC" id="1.1.1.85"/>
    </reaction>
</comment>
<comment type="cofactor">
    <cofactor evidence="1">
        <name>Mg(2+)</name>
        <dbReference type="ChEBI" id="CHEBI:18420"/>
    </cofactor>
    <cofactor evidence="1">
        <name>Mn(2+)</name>
        <dbReference type="ChEBI" id="CHEBI:29035"/>
    </cofactor>
    <text evidence="1">Binds 1 Mg(2+) or Mn(2+) ion per subunit.</text>
</comment>
<comment type="pathway">
    <text evidence="1">Amino-acid biosynthesis; L-leucine biosynthesis; L-leucine from 3-methyl-2-oxobutanoate: step 3/4.</text>
</comment>
<comment type="subunit">
    <text evidence="1">Homodimer.</text>
</comment>
<comment type="subcellular location">
    <subcellularLocation>
        <location evidence="1">Cytoplasm</location>
    </subcellularLocation>
</comment>
<comment type="similarity">
    <text evidence="1">Belongs to the isocitrate and isopropylmalate dehydrogenases family. LeuB type 1 subfamily.</text>
</comment>
<feature type="chain" id="PRO_0000083788" description="3-isopropylmalate dehydrogenase">
    <location>
        <begin position="1"/>
        <end position="357"/>
    </location>
</feature>
<feature type="binding site" evidence="1">
    <location>
        <begin position="76"/>
        <end position="89"/>
    </location>
    <ligand>
        <name>NAD(+)</name>
        <dbReference type="ChEBI" id="CHEBI:57540"/>
    </ligand>
</feature>
<feature type="binding site" evidence="1">
    <location>
        <position position="96"/>
    </location>
    <ligand>
        <name>substrate</name>
    </ligand>
</feature>
<feature type="binding site" evidence="1">
    <location>
        <position position="106"/>
    </location>
    <ligand>
        <name>substrate</name>
    </ligand>
</feature>
<feature type="binding site" evidence="1">
    <location>
        <position position="134"/>
    </location>
    <ligand>
        <name>substrate</name>
    </ligand>
</feature>
<feature type="binding site" evidence="1">
    <location>
        <position position="224"/>
    </location>
    <ligand>
        <name>Mg(2+)</name>
        <dbReference type="ChEBI" id="CHEBI:18420"/>
    </ligand>
</feature>
<feature type="binding site" evidence="1">
    <location>
        <position position="224"/>
    </location>
    <ligand>
        <name>substrate</name>
    </ligand>
</feature>
<feature type="binding site" evidence="1">
    <location>
        <position position="248"/>
    </location>
    <ligand>
        <name>Mg(2+)</name>
        <dbReference type="ChEBI" id="CHEBI:18420"/>
    </ligand>
</feature>
<feature type="binding site" evidence="1">
    <location>
        <position position="252"/>
    </location>
    <ligand>
        <name>Mg(2+)</name>
        <dbReference type="ChEBI" id="CHEBI:18420"/>
    </ligand>
</feature>
<feature type="binding site" evidence="1">
    <location>
        <begin position="282"/>
        <end position="294"/>
    </location>
    <ligand>
        <name>NAD(+)</name>
        <dbReference type="ChEBI" id="CHEBI:57540"/>
    </ligand>
</feature>
<feature type="site" description="Important for catalysis" evidence="1">
    <location>
        <position position="141"/>
    </location>
</feature>
<feature type="site" description="Important for catalysis" evidence="1">
    <location>
        <position position="192"/>
    </location>
</feature>
<proteinExistence type="inferred from homology"/>
<organism>
    <name type="scientific">Xanthomonas oryzae pv. oryzae (strain KACC10331 / KXO85)</name>
    <dbReference type="NCBI Taxonomy" id="291331"/>
    <lineage>
        <taxon>Bacteria</taxon>
        <taxon>Pseudomonadati</taxon>
        <taxon>Pseudomonadota</taxon>
        <taxon>Gammaproteobacteria</taxon>
        <taxon>Lysobacterales</taxon>
        <taxon>Lysobacteraceae</taxon>
        <taxon>Xanthomonas</taxon>
    </lineage>
</organism>
<accession>Q5H4C7</accession>
<sequence length="357" mass="38196">MSKQILILPGDGIGPEIMAEAVKVLQRIDTQHGLGFELVYDELGGAAYDKYGSPLADETLERARAADAVLLGAVGGPQWDTIDPSLRPERGLLKIRSQLGLFANLRPALLYPQLADASTLKPEVVAGLDLLILRELTGGIYFGQPRGNRTLDNGERQAYDTLPYSESEICRIAKAGFEMARLRGKKLCSVDKANVLASSQLWRAVVEEVAKDYPDIALSHMYVDNAAMQLVRAPKQFDVIVTDNMFGDILSDQASMLTGSIGMLPSASLDANSKGMYEPCHGSAPDIAGKGIANPLATILSVAMMLRYTFAQADAADAIERAVGKVLDQGLRTADIWSEGTTKVGTVAMGDAVVAAL</sequence>
<protein>
    <recommendedName>
        <fullName evidence="1">3-isopropylmalate dehydrogenase</fullName>
        <ecNumber evidence="1">1.1.1.85</ecNumber>
    </recommendedName>
    <alternativeName>
        <fullName evidence="1">3-IPM-DH</fullName>
    </alternativeName>
    <alternativeName>
        <fullName evidence="1">Beta-IPM dehydrogenase</fullName>
        <shortName evidence="1">IMDH</shortName>
    </alternativeName>
</protein>
<evidence type="ECO:0000255" key="1">
    <source>
        <dbReference type="HAMAP-Rule" id="MF_01033"/>
    </source>
</evidence>
<reference key="1">
    <citation type="journal article" date="2005" name="Nucleic Acids Res.">
        <title>The genome sequence of Xanthomonas oryzae pathovar oryzae KACC10331, the bacterial blight pathogen of rice.</title>
        <authorList>
            <person name="Lee B.-M."/>
            <person name="Park Y.-J."/>
            <person name="Park D.-S."/>
            <person name="Kang H.-W."/>
            <person name="Kim J.-G."/>
            <person name="Song E.-S."/>
            <person name="Park I.-C."/>
            <person name="Yoon U.-H."/>
            <person name="Hahn J.-H."/>
            <person name="Koo B.-S."/>
            <person name="Lee G.-B."/>
            <person name="Kim H."/>
            <person name="Park H.-S."/>
            <person name="Yoon K.-O."/>
            <person name="Kim J.-H."/>
            <person name="Jung C.-H."/>
            <person name="Koh N.-H."/>
            <person name="Seo J.-S."/>
            <person name="Go S.-J."/>
        </authorList>
    </citation>
    <scope>NUCLEOTIDE SEQUENCE [LARGE SCALE GENOMIC DNA]</scope>
    <source>
        <strain>KACC10331 / KXO85</strain>
    </source>
</reference>
<dbReference type="EC" id="1.1.1.85" evidence="1"/>
<dbReference type="EMBL" id="AE013598">
    <property type="protein sequence ID" value="AAW74194.1"/>
    <property type="molecule type" value="Genomic_DNA"/>
</dbReference>
<dbReference type="SMR" id="Q5H4C7"/>
<dbReference type="STRING" id="291331.XOO0940"/>
<dbReference type="KEGG" id="xoo:XOO0940"/>
<dbReference type="HOGENOM" id="CLU_031953_0_3_6"/>
<dbReference type="UniPathway" id="UPA00048">
    <property type="reaction ID" value="UER00072"/>
</dbReference>
<dbReference type="Proteomes" id="UP000006735">
    <property type="component" value="Chromosome"/>
</dbReference>
<dbReference type="GO" id="GO:0005829">
    <property type="term" value="C:cytosol"/>
    <property type="evidence" value="ECO:0007669"/>
    <property type="project" value="TreeGrafter"/>
</dbReference>
<dbReference type="GO" id="GO:0003862">
    <property type="term" value="F:3-isopropylmalate dehydrogenase activity"/>
    <property type="evidence" value="ECO:0007669"/>
    <property type="project" value="UniProtKB-UniRule"/>
</dbReference>
<dbReference type="GO" id="GO:0000287">
    <property type="term" value="F:magnesium ion binding"/>
    <property type="evidence" value="ECO:0007669"/>
    <property type="project" value="InterPro"/>
</dbReference>
<dbReference type="GO" id="GO:0051287">
    <property type="term" value="F:NAD binding"/>
    <property type="evidence" value="ECO:0007669"/>
    <property type="project" value="InterPro"/>
</dbReference>
<dbReference type="GO" id="GO:0009098">
    <property type="term" value="P:L-leucine biosynthetic process"/>
    <property type="evidence" value="ECO:0007669"/>
    <property type="project" value="UniProtKB-UniRule"/>
</dbReference>
<dbReference type="FunFam" id="3.40.718.10:FF:000004">
    <property type="entry name" value="3-isopropylmalate dehydrogenase"/>
    <property type="match status" value="1"/>
</dbReference>
<dbReference type="Gene3D" id="3.40.718.10">
    <property type="entry name" value="Isopropylmalate Dehydrogenase"/>
    <property type="match status" value="1"/>
</dbReference>
<dbReference type="HAMAP" id="MF_01033">
    <property type="entry name" value="LeuB_type1"/>
    <property type="match status" value="1"/>
</dbReference>
<dbReference type="InterPro" id="IPR019818">
    <property type="entry name" value="IsoCit/isopropylmalate_DH_CS"/>
</dbReference>
<dbReference type="InterPro" id="IPR024084">
    <property type="entry name" value="IsoPropMal-DH-like_dom"/>
</dbReference>
<dbReference type="InterPro" id="IPR004429">
    <property type="entry name" value="Isopropylmalate_DH"/>
</dbReference>
<dbReference type="NCBIfam" id="TIGR00169">
    <property type="entry name" value="leuB"/>
    <property type="match status" value="1"/>
</dbReference>
<dbReference type="PANTHER" id="PTHR42979">
    <property type="entry name" value="3-ISOPROPYLMALATE DEHYDROGENASE"/>
    <property type="match status" value="1"/>
</dbReference>
<dbReference type="PANTHER" id="PTHR42979:SF1">
    <property type="entry name" value="3-ISOPROPYLMALATE DEHYDROGENASE"/>
    <property type="match status" value="1"/>
</dbReference>
<dbReference type="Pfam" id="PF00180">
    <property type="entry name" value="Iso_dh"/>
    <property type="match status" value="1"/>
</dbReference>
<dbReference type="SMART" id="SM01329">
    <property type="entry name" value="Iso_dh"/>
    <property type="match status" value="1"/>
</dbReference>
<dbReference type="SUPFAM" id="SSF53659">
    <property type="entry name" value="Isocitrate/Isopropylmalate dehydrogenase-like"/>
    <property type="match status" value="1"/>
</dbReference>
<dbReference type="PROSITE" id="PS00470">
    <property type="entry name" value="IDH_IMDH"/>
    <property type="match status" value="1"/>
</dbReference>
<name>LEU3_XANOR</name>